<reference key="1">
    <citation type="journal article" date="2006" name="Mol. Microbiol.">
        <title>Role of pathogenicity island-associated integrases in the genome plasticity of uropathogenic Escherichia coli strain 536.</title>
        <authorList>
            <person name="Hochhut B."/>
            <person name="Wilde C."/>
            <person name="Balling G."/>
            <person name="Middendorf B."/>
            <person name="Dobrindt U."/>
            <person name="Brzuszkiewicz E."/>
            <person name="Gottschalk G."/>
            <person name="Carniel E."/>
            <person name="Hacker J."/>
        </authorList>
    </citation>
    <scope>NUCLEOTIDE SEQUENCE [LARGE SCALE GENOMIC DNA]</scope>
    <source>
        <strain>536 / UPEC</strain>
    </source>
</reference>
<proteinExistence type="inferred from homology"/>
<feature type="chain" id="PRO_0000267665" description="3-octaprenyl-4-hydroxybenzoate carboxy-lyase">
    <location>
        <begin position="1"/>
        <end position="498"/>
    </location>
</feature>
<feature type="active site" description="Proton donor" evidence="1">
    <location>
        <position position="291"/>
    </location>
</feature>
<feature type="binding site" evidence="1">
    <location>
        <position position="176"/>
    </location>
    <ligand>
        <name>Mn(2+)</name>
        <dbReference type="ChEBI" id="CHEBI:29035"/>
    </ligand>
</feature>
<feature type="binding site" evidence="1">
    <location>
        <begin position="179"/>
        <end position="181"/>
    </location>
    <ligand>
        <name>prenylated FMN</name>
        <dbReference type="ChEBI" id="CHEBI:87746"/>
    </ligand>
</feature>
<feature type="binding site" evidence="1">
    <location>
        <begin position="193"/>
        <end position="195"/>
    </location>
    <ligand>
        <name>prenylated FMN</name>
        <dbReference type="ChEBI" id="CHEBI:87746"/>
    </ligand>
</feature>
<feature type="binding site" evidence="1">
    <location>
        <begin position="198"/>
        <end position="199"/>
    </location>
    <ligand>
        <name>prenylated FMN</name>
        <dbReference type="ChEBI" id="CHEBI:87746"/>
    </ligand>
</feature>
<feature type="binding site" evidence="1">
    <location>
        <position position="242"/>
    </location>
    <ligand>
        <name>Mn(2+)</name>
        <dbReference type="ChEBI" id="CHEBI:29035"/>
    </ligand>
</feature>
<sequence>MDAMKYNDLRDFLTLLEQQGELKRITLPVDPHLEITEIWLDRTLRAGGPALLFENPKGYSMPVLCNLFGTPKRVAMGMGQEDVSALREVGKLLAFLKEPEPPKGFRDLFDKLPQFKQVLNMPTKRLRGAPCQQKIVSGDDVDLNRIPIMTCWPEDAAPLITWGLTVTRGPHKERQNLGIYRQQLIGKNKLIMRWLSHRGGALDYQEWCAAHPGERFPVSVALGADPATILGAVTPVPDTLSEYAFAGLLRGTKTEVVKCISNDLEVPASAEIVLEGYIEQGETAPEGPYGDHTGYYNEVDSFPVFTVTHITQREDAIYHSTYTGRPPDEPAVLGVALNEVFVPILQKQFPEIVDFYLPPEGCSYRLAVVTIKKQYAGHAKRVMMGVWSFLRQFMYTKFVIVCDDDVNARDWNDVIWAITTRMDPARDTVLVENTPIDYLDFASPVSGLGSKMGLDATNKWPGETQREWGRPIKKDPDVVAHIDAIWDELAIFNNGKSA</sequence>
<protein>
    <recommendedName>
        <fullName evidence="1">3-octaprenyl-4-hydroxybenzoate carboxy-lyase</fullName>
        <ecNumber evidence="1">4.1.1.98</ecNumber>
    </recommendedName>
    <alternativeName>
        <fullName evidence="1">Polyprenyl p-hydroxybenzoate decarboxylase</fullName>
    </alternativeName>
</protein>
<keyword id="KW-1003">Cell membrane</keyword>
<keyword id="KW-0210">Decarboxylase</keyword>
<keyword id="KW-0285">Flavoprotein</keyword>
<keyword id="KW-0288">FMN</keyword>
<keyword id="KW-0456">Lyase</keyword>
<keyword id="KW-0464">Manganese</keyword>
<keyword id="KW-0472">Membrane</keyword>
<keyword id="KW-0479">Metal-binding</keyword>
<keyword id="KW-0831">Ubiquinone biosynthesis</keyword>
<accession>Q0TAL3</accession>
<evidence type="ECO:0000255" key="1">
    <source>
        <dbReference type="HAMAP-Rule" id="MF_01636"/>
    </source>
</evidence>
<name>UBID_ECOL5</name>
<gene>
    <name evidence="1" type="primary">ubiD</name>
    <name type="ordered locus">ECP_4056</name>
</gene>
<comment type="function">
    <text evidence="1">Catalyzes the decarboxylation of 3-octaprenyl-4-hydroxy benzoate to 2-octaprenylphenol, an intermediate step in ubiquinone biosynthesis.</text>
</comment>
<comment type="catalytic activity">
    <reaction evidence="1">
        <text>a 4-hydroxy-3-(all-trans-polyprenyl)benzoate + H(+) = a 2-(all-trans-polyprenyl)phenol + CO2</text>
        <dbReference type="Rhea" id="RHEA:41680"/>
        <dbReference type="Rhea" id="RHEA-COMP:9514"/>
        <dbReference type="Rhea" id="RHEA-COMP:9516"/>
        <dbReference type="ChEBI" id="CHEBI:1269"/>
        <dbReference type="ChEBI" id="CHEBI:15378"/>
        <dbReference type="ChEBI" id="CHEBI:16526"/>
        <dbReference type="ChEBI" id="CHEBI:78396"/>
        <dbReference type="EC" id="4.1.1.98"/>
    </reaction>
</comment>
<comment type="cofactor">
    <cofactor evidence="1">
        <name>prenylated FMN</name>
        <dbReference type="ChEBI" id="CHEBI:87746"/>
    </cofactor>
    <text evidence="1">Binds 1 prenylated FMN per subunit.</text>
</comment>
<comment type="cofactor">
    <cofactor evidence="1">
        <name>Mn(2+)</name>
        <dbReference type="ChEBI" id="CHEBI:29035"/>
    </cofactor>
</comment>
<comment type="pathway">
    <text evidence="1">Cofactor biosynthesis; ubiquinone biosynthesis.</text>
</comment>
<comment type="subunit">
    <text evidence="1">Homohexamer.</text>
</comment>
<comment type="subcellular location">
    <subcellularLocation>
        <location evidence="1">Cell membrane</location>
        <topology evidence="1">Peripheral membrane protein</topology>
    </subcellularLocation>
</comment>
<comment type="similarity">
    <text evidence="1">Belongs to the UbiD family.</text>
</comment>
<dbReference type="EC" id="4.1.1.98" evidence="1"/>
<dbReference type="EMBL" id="CP000247">
    <property type="protein sequence ID" value="ABG72016.1"/>
    <property type="molecule type" value="Genomic_DNA"/>
</dbReference>
<dbReference type="RefSeq" id="WP_000339823.1">
    <property type="nucleotide sequence ID" value="NC_008253.1"/>
</dbReference>
<dbReference type="SMR" id="Q0TAL3"/>
<dbReference type="KEGG" id="ecp:ECP_4056"/>
<dbReference type="HOGENOM" id="CLU_023348_4_1_6"/>
<dbReference type="UniPathway" id="UPA00232"/>
<dbReference type="Proteomes" id="UP000009182">
    <property type="component" value="Chromosome"/>
</dbReference>
<dbReference type="GO" id="GO:0005829">
    <property type="term" value="C:cytosol"/>
    <property type="evidence" value="ECO:0007669"/>
    <property type="project" value="TreeGrafter"/>
</dbReference>
<dbReference type="GO" id="GO:0005886">
    <property type="term" value="C:plasma membrane"/>
    <property type="evidence" value="ECO:0007669"/>
    <property type="project" value="UniProtKB-SubCell"/>
</dbReference>
<dbReference type="GO" id="GO:0008694">
    <property type="term" value="F:3-octaprenyl-4-hydroxybenzoate carboxy-lyase activity"/>
    <property type="evidence" value="ECO:0007669"/>
    <property type="project" value="UniProtKB-UniRule"/>
</dbReference>
<dbReference type="GO" id="GO:0046872">
    <property type="term" value="F:metal ion binding"/>
    <property type="evidence" value="ECO:0007669"/>
    <property type="project" value="UniProtKB-KW"/>
</dbReference>
<dbReference type="GO" id="GO:0006744">
    <property type="term" value="P:ubiquinone biosynthetic process"/>
    <property type="evidence" value="ECO:0007669"/>
    <property type="project" value="UniProtKB-UniRule"/>
</dbReference>
<dbReference type="FunFam" id="1.20.5.570:FF:000001">
    <property type="entry name" value="3-octaprenyl-4-hydroxybenzoate carboxy-lyase"/>
    <property type="match status" value="1"/>
</dbReference>
<dbReference type="FunFam" id="3.40.1670.10:FF:000001">
    <property type="entry name" value="3-octaprenyl-4-hydroxybenzoate carboxy-lyase"/>
    <property type="match status" value="1"/>
</dbReference>
<dbReference type="Gene3D" id="1.20.5.570">
    <property type="entry name" value="Single helix bin"/>
    <property type="match status" value="1"/>
</dbReference>
<dbReference type="Gene3D" id="3.40.1670.10">
    <property type="entry name" value="UbiD C-terminal domain-like"/>
    <property type="match status" value="1"/>
</dbReference>
<dbReference type="HAMAP" id="MF_01636">
    <property type="entry name" value="UbiD"/>
    <property type="match status" value="1"/>
</dbReference>
<dbReference type="InterPro" id="IPR002830">
    <property type="entry name" value="UbiD"/>
</dbReference>
<dbReference type="InterPro" id="IPR049381">
    <property type="entry name" value="UbiD-like_C"/>
</dbReference>
<dbReference type="InterPro" id="IPR049383">
    <property type="entry name" value="UbiD-like_N"/>
</dbReference>
<dbReference type="InterPro" id="IPR023677">
    <property type="entry name" value="UbiD_bacteria"/>
</dbReference>
<dbReference type="InterPro" id="IPR048304">
    <property type="entry name" value="UbiD_Rift_dom"/>
</dbReference>
<dbReference type="NCBIfam" id="NF008175">
    <property type="entry name" value="PRK10922.1"/>
    <property type="match status" value="1"/>
</dbReference>
<dbReference type="NCBIfam" id="TIGR00148">
    <property type="entry name" value="UbiD family decarboxylase"/>
    <property type="match status" value="1"/>
</dbReference>
<dbReference type="PANTHER" id="PTHR30108">
    <property type="entry name" value="3-OCTAPRENYL-4-HYDROXYBENZOATE CARBOXY-LYASE-RELATED"/>
    <property type="match status" value="1"/>
</dbReference>
<dbReference type="PANTHER" id="PTHR30108:SF17">
    <property type="entry name" value="FERULIC ACID DECARBOXYLASE 1"/>
    <property type="match status" value="1"/>
</dbReference>
<dbReference type="Pfam" id="PF01977">
    <property type="entry name" value="UbiD"/>
    <property type="match status" value="1"/>
</dbReference>
<dbReference type="Pfam" id="PF20696">
    <property type="entry name" value="UbiD_C"/>
    <property type="match status" value="1"/>
</dbReference>
<dbReference type="Pfam" id="PF20695">
    <property type="entry name" value="UbiD_N"/>
    <property type="match status" value="1"/>
</dbReference>
<dbReference type="SUPFAM" id="SSF50475">
    <property type="entry name" value="FMN-binding split barrel"/>
    <property type="match status" value="1"/>
</dbReference>
<dbReference type="SUPFAM" id="SSF143968">
    <property type="entry name" value="UbiD C-terminal domain-like"/>
    <property type="match status" value="1"/>
</dbReference>
<organism>
    <name type="scientific">Escherichia coli O6:K15:H31 (strain 536 / UPEC)</name>
    <dbReference type="NCBI Taxonomy" id="362663"/>
    <lineage>
        <taxon>Bacteria</taxon>
        <taxon>Pseudomonadati</taxon>
        <taxon>Pseudomonadota</taxon>
        <taxon>Gammaproteobacteria</taxon>
        <taxon>Enterobacterales</taxon>
        <taxon>Enterobacteriaceae</taxon>
        <taxon>Escherichia</taxon>
    </lineage>
</organism>